<keyword id="KW-0067">ATP-binding</keyword>
<keyword id="KW-0436">Ligase</keyword>
<keyword id="KW-0547">Nucleotide-binding</keyword>
<keyword id="KW-0658">Purine biosynthesis</keyword>
<accession>C0R444</accession>
<organism>
    <name type="scientific">Wolbachia sp. subsp. Drosophila simulans (strain wRi)</name>
    <dbReference type="NCBI Taxonomy" id="66084"/>
    <lineage>
        <taxon>Bacteria</taxon>
        <taxon>Pseudomonadati</taxon>
        <taxon>Pseudomonadota</taxon>
        <taxon>Alphaproteobacteria</taxon>
        <taxon>Rickettsiales</taxon>
        <taxon>Anaplasmataceae</taxon>
        <taxon>Wolbachieae</taxon>
        <taxon>Wolbachia</taxon>
    </lineage>
</organism>
<sequence length="240" mass="27681">MSLNKTIYEGKAKAIIETEDSSTVIQHFKDDVTAFNKEKYEIIESKGIINNHISAFIMEKLEKAEISTHFIKTLNEREQLVKKLKIIPLEVVVRNVAAGSFCKRFNIKEGERLASPIIDFFYKNDDLADPMVSENHILYFDWLSSKEMDEVKTTTLKINEILVHLFSNASIYLVDLKLEFGRLINDSTKIVLADEISPDNCRLWDKNTYKKLDKDVFRLNLGDLKEAYLEVAKRLSVKLG</sequence>
<feature type="chain" id="PRO_1000122940" description="Phosphoribosylaminoimidazole-succinocarboxamide synthase">
    <location>
        <begin position="1"/>
        <end position="240"/>
    </location>
</feature>
<proteinExistence type="inferred from homology"/>
<comment type="catalytic activity">
    <reaction evidence="1">
        <text>5-amino-1-(5-phospho-D-ribosyl)imidazole-4-carboxylate + L-aspartate + ATP = (2S)-2-[5-amino-1-(5-phospho-beta-D-ribosyl)imidazole-4-carboxamido]succinate + ADP + phosphate + 2 H(+)</text>
        <dbReference type="Rhea" id="RHEA:22628"/>
        <dbReference type="ChEBI" id="CHEBI:15378"/>
        <dbReference type="ChEBI" id="CHEBI:29991"/>
        <dbReference type="ChEBI" id="CHEBI:30616"/>
        <dbReference type="ChEBI" id="CHEBI:43474"/>
        <dbReference type="ChEBI" id="CHEBI:58443"/>
        <dbReference type="ChEBI" id="CHEBI:77657"/>
        <dbReference type="ChEBI" id="CHEBI:456216"/>
        <dbReference type="EC" id="6.3.2.6"/>
    </reaction>
</comment>
<comment type="pathway">
    <text evidence="1">Purine metabolism; IMP biosynthesis via de novo pathway; 5-amino-1-(5-phospho-D-ribosyl)imidazole-4-carboxamide from 5-amino-1-(5-phospho-D-ribosyl)imidazole-4-carboxylate: step 1/2.</text>
</comment>
<comment type="similarity">
    <text evidence="1">Belongs to the SAICAR synthetase family.</text>
</comment>
<evidence type="ECO:0000255" key="1">
    <source>
        <dbReference type="HAMAP-Rule" id="MF_00137"/>
    </source>
</evidence>
<name>PUR7_WOLWR</name>
<reference key="1">
    <citation type="journal article" date="2009" name="Proc. Natl. Acad. Sci. U.S.A.">
        <title>The mosaic genome structure of the Wolbachia wRi strain infecting Drosophila simulans.</title>
        <authorList>
            <person name="Klasson L."/>
            <person name="Westberg J."/>
            <person name="Sapountzis P."/>
            <person name="Naeslund K."/>
            <person name="Lutnaes Y."/>
            <person name="Darby A.C."/>
            <person name="Veneti Z."/>
            <person name="Chen L."/>
            <person name="Braig H.R."/>
            <person name="Garrett R."/>
            <person name="Bourtzis K."/>
            <person name="Andersson S.G."/>
        </authorList>
    </citation>
    <scope>NUCLEOTIDE SEQUENCE [LARGE SCALE GENOMIC DNA]</scope>
    <source>
        <strain>wRi</strain>
    </source>
</reference>
<gene>
    <name evidence="1" type="primary">purC</name>
    <name type="ordered locus">WRi_009790</name>
</gene>
<protein>
    <recommendedName>
        <fullName evidence="1">Phosphoribosylaminoimidazole-succinocarboxamide synthase</fullName>
        <ecNumber evidence="1">6.3.2.6</ecNumber>
    </recommendedName>
    <alternativeName>
        <fullName evidence="1">SAICAR synthetase</fullName>
    </alternativeName>
</protein>
<dbReference type="EC" id="6.3.2.6" evidence="1"/>
<dbReference type="EMBL" id="CP001391">
    <property type="protein sequence ID" value="ACN95686.1"/>
    <property type="molecule type" value="Genomic_DNA"/>
</dbReference>
<dbReference type="RefSeq" id="WP_007549278.1">
    <property type="nucleotide sequence ID" value="NZ_MKIF01000073.1"/>
</dbReference>
<dbReference type="SMR" id="C0R444"/>
<dbReference type="STRING" id="66084.WRi_009790"/>
<dbReference type="KEGG" id="wri:WRi_009790"/>
<dbReference type="HOGENOM" id="CLU_061495_2_0_5"/>
<dbReference type="UniPathway" id="UPA00074">
    <property type="reaction ID" value="UER00131"/>
</dbReference>
<dbReference type="Proteomes" id="UP000001293">
    <property type="component" value="Chromosome"/>
</dbReference>
<dbReference type="GO" id="GO:0005829">
    <property type="term" value="C:cytosol"/>
    <property type="evidence" value="ECO:0007669"/>
    <property type="project" value="TreeGrafter"/>
</dbReference>
<dbReference type="GO" id="GO:0005524">
    <property type="term" value="F:ATP binding"/>
    <property type="evidence" value="ECO:0007669"/>
    <property type="project" value="UniProtKB-KW"/>
</dbReference>
<dbReference type="GO" id="GO:0004639">
    <property type="term" value="F:phosphoribosylaminoimidazolesuccinocarboxamide synthase activity"/>
    <property type="evidence" value="ECO:0007669"/>
    <property type="project" value="UniProtKB-UniRule"/>
</dbReference>
<dbReference type="GO" id="GO:0006189">
    <property type="term" value="P:'de novo' IMP biosynthetic process"/>
    <property type="evidence" value="ECO:0007669"/>
    <property type="project" value="UniProtKB-UniRule"/>
</dbReference>
<dbReference type="GO" id="GO:0009236">
    <property type="term" value="P:cobalamin biosynthetic process"/>
    <property type="evidence" value="ECO:0007669"/>
    <property type="project" value="InterPro"/>
</dbReference>
<dbReference type="CDD" id="cd01415">
    <property type="entry name" value="SAICAR_synt_PurC"/>
    <property type="match status" value="1"/>
</dbReference>
<dbReference type="FunFam" id="3.30.470.20:FF:000006">
    <property type="entry name" value="Phosphoribosylaminoimidazole-succinocarboxamide synthase"/>
    <property type="match status" value="1"/>
</dbReference>
<dbReference type="Gene3D" id="3.30.470.20">
    <property type="entry name" value="ATP-grasp fold, B domain"/>
    <property type="match status" value="1"/>
</dbReference>
<dbReference type="Gene3D" id="3.30.200.20">
    <property type="entry name" value="Phosphorylase Kinase, domain 1"/>
    <property type="match status" value="1"/>
</dbReference>
<dbReference type="HAMAP" id="MF_00137">
    <property type="entry name" value="SAICAR_synth"/>
    <property type="match status" value="1"/>
</dbReference>
<dbReference type="InterPro" id="IPR028923">
    <property type="entry name" value="SAICAR_synt/ADE2_N"/>
</dbReference>
<dbReference type="InterPro" id="IPR033934">
    <property type="entry name" value="SAICAR_synt_PurC"/>
</dbReference>
<dbReference type="InterPro" id="IPR001636">
    <property type="entry name" value="SAICAR_synth"/>
</dbReference>
<dbReference type="InterPro" id="IPR050089">
    <property type="entry name" value="SAICAR_synthetase"/>
</dbReference>
<dbReference type="InterPro" id="IPR018236">
    <property type="entry name" value="SAICAR_synthetase_CS"/>
</dbReference>
<dbReference type="NCBIfam" id="TIGR00081">
    <property type="entry name" value="purC"/>
    <property type="match status" value="1"/>
</dbReference>
<dbReference type="PANTHER" id="PTHR43599">
    <property type="entry name" value="MULTIFUNCTIONAL PROTEIN ADE2"/>
    <property type="match status" value="1"/>
</dbReference>
<dbReference type="PANTHER" id="PTHR43599:SF3">
    <property type="entry name" value="SI:DKEY-6E2.2"/>
    <property type="match status" value="1"/>
</dbReference>
<dbReference type="Pfam" id="PF01259">
    <property type="entry name" value="SAICAR_synt"/>
    <property type="match status" value="1"/>
</dbReference>
<dbReference type="SUPFAM" id="SSF56104">
    <property type="entry name" value="SAICAR synthase-like"/>
    <property type="match status" value="1"/>
</dbReference>
<dbReference type="PROSITE" id="PS01057">
    <property type="entry name" value="SAICAR_SYNTHETASE_1"/>
    <property type="match status" value="1"/>
</dbReference>
<dbReference type="PROSITE" id="PS01058">
    <property type="entry name" value="SAICAR_SYNTHETASE_2"/>
    <property type="match status" value="1"/>
</dbReference>